<evidence type="ECO:0000255" key="1">
    <source>
        <dbReference type="HAMAP-Rule" id="MF_01318"/>
    </source>
</evidence>
<evidence type="ECO:0000305" key="2"/>
<protein>
    <recommendedName>
        <fullName evidence="1">Large ribosomal subunit protein uL1</fullName>
    </recommendedName>
    <alternativeName>
        <fullName evidence="2">50S ribosomal protein L1</fullName>
    </alternativeName>
</protein>
<feature type="chain" id="PRO_0000307984" description="Large ribosomal subunit protein uL1">
    <location>
        <begin position="1"/>
        <end position="233"/>
    </location>
</feature>
<sequence length="233" mass="25047">MAKIAKRLKELSQKIDSNKEYALSDAIDTIKTLKSAKFDETVEIALKLNVDPRHADQMVRGSVVLPAGTGKKVRVAVIAKDAKADEAKNAGADIVGSDDLVEEIQKGNMNFDVLIATPNLMGLVGKVGRILGPKGLMPNPKTGTVTMDVAQAVNNAKSGQVNFRVDKQGNIHAGLGKVSFSKEQLWDNVSTFVKAINKHKPAAAKGRYIKNAALSLTMSPSVKLETQELLDMK</sequence>
<reference key="1">
    <citation type="submission" date="2006-12" db="EMBL/GenBank/DDBJ databases">
        <authorList>
            <person name="Fouts D.E."/>
            <person name="Nelson K.E."/>
            <person name="Sebastian Y."/>
        </authorList>
    </citation>
    <scope>NUCLEOTIDE SEQUENCE [LARGE SCALE GENOMIC DNA]</scope>
    <source>
        <strain>81-176</strain>
    </source>
</reference>
<keyword id="KW-0678">Repressor</keyword>
<keyword id="KW-0687">Ribonucleoprotein</keyword>
<keyword id="KW-0689">Ribosomal protein</keyword>
<keyword id="KW-0694">RNA-binding</keyword>
<keyword id="KW-0699">rRNA-binding</keyword>
<keyword id="KW-0810">Translation regulation</keyword>
<keyword id="KW-0820">tRNA-binding</keyword>
<gene>
    <name evidence="1" type="primary">rplA</name>
    <name type="ordered locus">CJJ81176_0506</name>
</gene>
<dbReference type="EMBL" id="CP000538">
    <property type="protein sequence ID" value="EAQ73175.1"/>
    <property type="molecule type" value="Genomic_DNA"/>
</dbReference>
<dbReference type="RefSeq" id="WP_002854928.1">
    <property type="nucleotide sequence ID" value="NC_008787.1"/>
</dbReference>
<dbReference type="SMR" id="A1VYJ1"/>
<dbReference type="KEGG" id="cjj:CJJ81176_0506"/>
<dbReference type="eggNOG" id="COG0081">
    <property type="taxonomic scope" value="Bacteria"/>
</dbReference>
<dbReference type="HOGENOM" id="CLU_062853_0_0_7"/>
<dbReference type="Proteomes" id="UP000000646">
    <property type="component" value="Chromosome"/>
</dbReference>
<dbReference type="GO" id="GO:0022625">
    <property type="term" value="C:cytosolic large ribosomal subunit"/>
    <property type="evidence" value="ECO:0007669"/>
    <property type="project" value="TreeGrafter"/>
</dbReference>
<dbReference type="GO" id="GO:0019843">
    <property type="term" value="F:rRNA binding"/>
    <property type="evidence" value="ECO:0007669"/>
    <property type="project" value="UniProtKB-UniRule"/>
</dbReference>
<dbReference type="GO" id="GO:0003735">
    <property type="term" value="F:structural constituent of ribosome"/>
    <property type="evidence" value="ECO:0007669"/>
    <property type="project" value="InterPro"/>
</dbReference>
<dbReference type="GO" id="GO:0000049">
    <property type="term" value="F:tRNA binding"/>
    <property type="evidence" value="ECO:0007669"/>
    <property type="project" value="UniProtKB-KW"/>
</dbReference>
<dbReference type="GO" id="GO:0006417">
    <property type="term" value="P:regulation of translation"/>
    <property type="evidence" value="ECO:0007669"/>
    <property type="project" value="UniProtKB-KW"/>
</dbReference>
<dbReference type="GO" id="GO:0006412">
    <property type="term" value="P:translation"/>
    <property type="evidence" value="ECO:0007669"/>
    <property type="project" value="UniProtKB-UniRule"/>
</dbReference>
<dbReference type="CDD" id="cd00403">
    <property type="entry name" value="Ribosomal_L1"/>
    <property type="match status" value="1"/>
</dbReference>
<dbReference type="FunFam" id="3.40.50.790:FF:000001">
    <property type="entry name" value="50S ribosomal protein L1"/>
    <property type="match status" value="1"/>
</dbReference>
<dbReference type="Gene3D" id="3.30.190.20">
    <property type="match status" value="1"/>
</dbReference>
<dbReference type="Gene3D" id="3.40.50.790">
    <property type="match status" value="1"/>
</dbReference>
<dbReference type="HAMAP" id="MF_01318_B">
    <property type="entry name" value="Ribosomal_uL1_B"/>
    <property type="match status" value="1"/>
</dbReference>
<dbReference type="InterPro" id="IPR005878">
    <property type="entry name" value="Ribosom_uL1_bac-type"/>
</dbReference>
<dbReference type="InterPro" id="IPR002143">
    <property type="entry name" value="Ribosomal_uL1"/>
</dbReference>
<dbReference type="InterPro" id="IPR023674">
    <property type="entry name" value="Ribosomal_uL1-like"/>
</dbReference>
<dbReference type="InterPro" id="IPR028364">
    <property type="entry name" value="Ribosomal_uL1/biogenesis"/>
</dbReference>
<dbReference type="InterPro" id="IPR016095">
    <property type="entry name" value="Ribosomal_uL1_3-a/b-sand"/>
</dbReference>
<dbReference type="InterPro" id="IPR023673">
    <property type="entry name" value="Ribosomal_uL1_CS"/>
</dbReference>
<dbReference type="NCBIfam" id="TIGR01169">
    <property type="entry name" value="rplA_bact"/>
    <property type="match status" value="1"/>
</dbReference>
<dbReference type="PANTHER" id="PTHR36427">
    <property type="entry name" value="54S RIBOSOMAL PROTEIN L1, MITOCHONDRIAL"/>
    <property type="match status" value="1"/>
</dbReference>
<dbReference type="PANTHER" id="PTHR36427:SF3">
    <property type="entry name" value="LARGE RIBOSOMAL SUBUNIT PROTEIN UL1M"/>
    <property type="match status" value="1"/>
</dbReference>
<dbReference type="Pfam" id="PF00687">
    <property type="entry name" value="Ribosomal_L1"/>
    <property type="match status" value="1"/>
</dbReference>
<dbReference type="PIRSF" id="PIRSF002155">
    <property type="entry name" value="Ribosomal_L1"/>
    <property type="match status" value="1"/>
</dbReference>
<dbReference type="SUPFAM" id="SSF56808">
    <property type="entry name" value="Ribosomal protein L1"/>
    <property type="match status" value="1"/>
</dbReference>
<dbReference type="PROSITE" id="PS01199">
    <property type="entry name" value="RIBOSOMAL_L1"/>
    <property type="match status" value="1"/>
</dbReference>
<organism>
    <name type="scientific">Campylobacter jejuni subsp. jejuni serotype O:23/36 (strain 81-176)</name>
    <dbReference type="NCBI Taxonomy" id="354242"/>
    <lineage>
        <taxon>Bacteria</taxon>
        <taxon>Pseudomonadati</taxon>
        <taxon>Campylobacterota</taxon>
        <taxon>Epsilonproteobacteria</taxon>
        <taxon>Campylobacterales</taxon>
        <taxon>Campylobacteraceae</taxon>
        <taxon>Campylobacter</taxon>
    </lineage>
</organism>
<proteinExistence type="inferred from homology"/>
<comment type="function">
    <text evidence="1">Binds directly to 23S rRNA. The L1 stalk is quite mobile in the ribosome, and is involved in E site tRNA release.</text>
</comment>
<comment type="function">
    <text evidence="1">Protein L1 is also a translational repressor protein, it controls the translation of the L11 operon by binding to its mRNA.</text>
</comment>
<comment type="subunit">
    <text evidence="1">Part of the 50S ribosomal subunit.</text>
</comment>
<comment type="similarity">
    <text evidence="1">Belongs to the universal ribosomal protein uL1 family.</text>
</comment>
<name>RL1_CAMJJ</name>
<accession>A1VYJ1</accession>